<protein>
    <recommendedName>
        <fullName>CDP-diacylglycerol--serine O-phosphatidyltransferase</fullName>
        <ecNumber>2.7.8.8</ecNumber>
    </recommendedName>
    <alternativeName>
        <fullName>Phosphatidylserine synthase</fullName>
    </alternativeName>
</protein>
<organism>
    <name type="scientific">Encephalitozoon cuniculi (strain GB-M1)</name>
    <name type="common">Microsporidian parasite</name>
    <dbReference type="NCBI Taxonomy" id="284813"/>
    <lineage>
        <taxon>Eukaryota</taxon>
        <taxon>Fungi</taxon>
        <taxon>Fungi incertae sedis</taxon>
        <taxon>Microsporidia</taxon>
        <taxon>Unikaryonidae</taxon>
        <taxon>Encephalitozoon</taxon>
    </lineage>
</organism>
<name>PSS_ENCCU</name>
<accession>Q95ZE2</accession>
<accession>Q8SQY0</accession>
<comment type="catalytic activity">
    <reaction>
        <text>a CDP-1,2-diacyl-sn-glycerol + L-serine = a 1,2-diacyl-sn-glycero-3-phospho-L-serine + CMP + H(+)</text>
        <dbReference type="Rhea" id="RHEA:16913"/>
        <dbReference type="ChEBI" id="CHEBI:15378"/>
        <dbReference type="ChEBI" id="CHEBI:33384"/>
        <dbReference type="ChEBI" id="CHEBI:57262"/>
        <dbReference type="ChEBI" id="CHEBI:58332"/>
        <dbReference type="ChEBI" id="CHEBI:60377"/>
        <dbReference type="EC" id="2.7.8.8"/>
    </reaction>
</comment>
<comment type="pathway">
    <text>Phospholipid metabolism; phosphatidylethanolamine biosynthesis; phosphatidylethanolamine from CDP-diacylglycerol: step 1/2.</text>
</comment>
<comment type="subcellular location">
    <subcellularLocation>
        <location evidence="1">Membrane</location>
        <topology evidence="1">Peripheral membrane protein</topology>
    </subcellularLocation>
</comment>
<comment type="similarity">
    <text evidence="2">Belongs to the CDP-alcohol phosphatidyltransferase class-I family.</text>
</comment>
<comment type="sequence caution" evidence="2">
    <conflict type="erroneous initiation">
        <sequence resource="EMBL-CDS" id="CAD25972"/>
    </conflict>
</comment>
<proteinExistence type="inferred from homology"/>
<reference key="1">
    <citation type="journal article" date="2001" name="Exp. Parasitol.">
        <title>Encephalitozoon cuniculi (Microspora): characterization of phospholipid metabolic pathway potentially linked to therapeutics.</title>
        <authorList>
            <person name="El Alaoui H."/>
            <person name="Bata J."/>
            <person name="Peyret P."/>
            <person name="Vivares C.P."/>
        </authorList>
    </citation>
    <scope>NUCLEOTIDE SEQUENCE [GENOMIC DNA]</scope>
</reference>
<reference key="2">
    <citation type="journal article" date="2001" name="Nature">
        <title>Genome sequence and gene compaction of the eukaryote parasite Encephalitozoon cuniculi.</title>
        <authorList>
            <person name="Katinka M.D."/>
            <person name="Duprat S."/>
            <person name="Cornillot E."/>
            <person name="Metenier G."/>
            <person name="Thomarat F."/>
            <person name="Prensier G."/>
            <person name="Barbe V."/>
            <person name="Peyretaillade E."/>
            <person name="Brottier P."/>
            <person name="Wincker P."/>
            <person name="Delbac F."/>
            <person name="El Alaoui H."/>
            <person name="Peyret P."/>
            <person name="Saurin W."/>
            <person name="Gouy M."/>
            <person name="Weissenbach J."/>
            <person name="Vivares C.P."/>
        </authorList>
    </citation>
    <scope>NUCLEOTIDE SEQUENCE [LARGE SCALE GENOMIC DNA]</scope>
    <source>
        <strain>GB-M1</strain>
    </source>
</reference>
<keyword id="KW-0444">Lipid biosynthesis</keyword>
<keyword id="KW-0443">Lipid metabolism</keyword>
<keyword id="KW-0472">Membrane</keyword>
<keyword id="KW-0594">Phospholipid biosynthesis</keyword>
<keyword id="KW-1208">Phospholipid metabolism</keyword>
<keyword id="KW-1185">Reference proteome</keyword>
<keyword id="KW-0808">Transferase</keyword>
<dbReference type="EC" id="2.7.8.8"/>
<dbReference type="EMBL" id="AJ310089">
    <property type="protein sequence ID" value="CAC51024.1"/>
    <property type="molecule type" value="Genomic_DNA"/>
</dbReference>
<dbReference type="EMBL" id="AL590450">
    <property type="protein sequence ID" value="CAD25972.1"/>
    <property type="status" value="ALT_INIT"/>
    <property type="molecule type" value="Genomic_DNA"/>
</dbReference>
<dbReference type="RefSeq" id="NP_586368.1">
    <property type="nucleotide sequence ID" value="NM_001042201.1"/>
</dbReference>
<dbReference type="SMR" id="Q95ZE2"/>
<dbReference type="FunCoup" id="Q95ZE2">
    <property type="interactions" value="88"/>
</dbReference>
<dbReference type="STRING" id="284813.Q95ZE2"/>
<dbReference type="GeneID" id="860021"/>
<dbReference type="KEGG" id="ecu:ECU11_0620"/>
<dbReference type="HOGENOM" id="CLU_035066_6_0_1"/>
<dbReference type="InParanoid" id="Q95ZE2"/>
<dbReference type="OrthoDB" id="196717at2759"/>
<dbReference type="UniPathway" id="UPA00558">
    <property type="reaction ID" value="UER00615"/>
</dbReference>
<dbReference type="Proteomes" id="UP000000819">
    <property type="component" value="Chromosome XI"/>
</dbReference>
<dbReference type="GO" id="GO:0016020">
    <property type="term" value="C:membrane"/>
    <property type="evidence" value="ECO:0007669"/>
    <property type="project" value="UniProtKB-SubCell"/>
</dbReference>
<dbReference type="GO" id="GO:0003882">
    <property type="term" value="F:CDP-diacylglycerol-serine O-phosphatidyltransferase activity"/>
    <property type="evidence" value="ECO:0007669"/>
    <property type="project" value="UniProtKB-EC"/>
</dbReference>
<dbReference type="GO" id="GO:0006646">
    <property type="term" value="P:phosphatidylethanolamine biosynthetic process"/>
    <property type="evidence" value="ECO:0007669"/>
    <property type="project" value="UniProtKB-UniPathway"/>
</dbReference>
<dbReference type="Gene3D" id="1.20.120.1760">
    <property type="match status" value="1"/>
</dbReference>
<dbReference type="InterPro" id="IPR000462">
    <property type="entry name" value="CDP-OH_P_trans"/>
</dbReference>
<dbReference type="InterPro" id="IPR043130">
    <property type="entry name" value="CDP-OH_PTrfase_TM_dom"/>
</dbReference>
<dbReference type="InterPro" id="IPR048254">
    <property type="entry name" value="CDP_ALCOHOL_P_TRANSF_CS"/>
</dbReference>
<dbReference type="InterPro" id="IPR014472">
    <property type="entry name" value="CHOPT"/>
</dbReference>
<dbReference type="PANTHER" id="PTHR10414:SF37">
    <property type="entry name" value="BB IN A BOXCAR, ISOFORM C"/>
    <property type="match status" value="1"/>
</dbReference>
<dbReference type="PANTHER" id="PTHR10414">
    <property type="entry name" value="ETHANOLAMINEPHOSPHOTRANSFERASE"/>
    <property type="match status" value="1"/>
</dbReference>
<dbReference type="Pfam" id="PF01066">
    <property type="entry name" value="CDP-OH_P_transf"/>
    <property type="match status" value="1"/>
</dbReference>
<dbReference type="PIRSF" id="PIRSF015665">
    <property type="entry name" value="CHOPT"/>
    <property type="match status" value="1"/>
</dbReference>
<dbReference type="PROSITE" id="PS00379">
    <property type="entry name" value="CDP_ALCOHOL_P_TRANSF"/>
    <property type="match status" value="1"/>
</dbReference>
<sequence>MKMEPDEVSSLRKHRFVGTDNSILGRYVLHHYTNWMLEKIPAFVAPNMLTLCGLIAMVASLALTLAFDPCLCSPPAFLSLANFLLMFVYFTCDNLDGAQARKTGSGSSLGQLFDHGVDSCCALITSIALSSTFGFGLSPKFLIFTLAVMVQFYLAGIEEKFTGRFVLGRISGASEGVVFAMGAHLATFLCGKRLFRHLFSDNFLWPVKKIYSSILGTDNFSAVSVIIGTALVFNTASTLISIEFKMHFPRRLLLYSTILRVMSFVTSFVILHNTLSTESLWIRHLNILMFGQIFSIKYVNEVCSYIIRRDPFLFTPPYLMYLTVSAVLQLQYLKEFRETLVAISFLLSSMYYLLVALRIIITFKEALGISFLSITTSDKSKAGG</sequence>
<gene>
    <name type="primary">PSS</name>
    <name type="ordered locus">ECU11_0620</name>
</gene>
<feature type="chain" id="PRO_0000056800" description="CDP-diacylglycerol--serine O-phosphatidyltransferase">
    <location>
        <begin position="1"/>
        <end position="384"/>
    </location>
</feature>
<evidence type="ECO:0000250" key="1"/>
<evidence type="ECO:0000305" key="2"/>